<evidence type="ECO:0000250" key="1">
    <source>
        <dbReference type="UniProtKB" id="Q84MB6"/>
    </source>
</evidence>
<evidence type="ECO:0000255" key="2">
    <source>
        <dbReference type="PROSITE-ProRule" id="PRU00805"/>
    </source>
</evidence>
<evidence type="ECO:0000269" key="3">
    <source>
    </source>
</evidence>
<evidence type="ECO:0000303" key="4">
    <source>
    </source>
</evidence>
<evidence type="ECO:0000305" key="5"/>
<evidence type="ECO:0000312" key="6">
    <source>
        <dbReference type="EMBL" id="KRH04547.1"/>
    </source>
</evidence>
<sequence length="331" mass="36995">MATDFSSIPIIDISPLLAKADDPKMAEDPGVLEVVKQLDKACTEAGFFYVKGHGFPETLLKEVRDVTRRFFELSYEEKAKIKMTPAAGFRGYQRLGENITKGVPDMHEAIDCYREVTKDMYGDLGKVMEGSNQWPQNPPTFKVLMEEYVSLCRDLARKIMRGIALALGGSPNEFEGQRAGDPFWVMRLIGYPGVSSVNGTNVHKNDIGCGAHTDYGLLTLLNQDDDVNALQVRNLSGEWITAPPVPGTFVCNIGDMLKIYSNGLYESTLHRVINNNSKYRVSVVYFYETNFDTAVEPLDTHKTRANGNKEFKRAVYGEHLTGKVLTNFVDL</sequence>
<accession>A0A0R4J5R0</accession>
<accession>C6T9R2</accession>
<accession>I1MVU1</accession>
<reference key="1">
    <citation type="journal article" date="2010" name="Nature">
        <title>Genome sequence of the palaeopolyploid soybean.</title>
        <authorList>
            <person name="Schmutz J."/>
            <person name="Cannon S.B."/>
            <person name="Schlueter J."/>
            <person name="Ma J."/>
            <person name="Mitros T."/>
            <person name="Nelson W."/>
            <person name="Hyten D.L."/>
            <person name="Song Q."/>
            <person name="Thelen J.J."/>
            <person name="Cheng J."/>
            <person name="Xu D."/>
            <person name="Hellsten U."/>
            <person name="May G.D."/>
            <person name="Yu Y."/>
            <person name="Sakurai T."/>
            <person name="Umezawa T."/>
            <person name="Bhattacharyya M.K."/>
            <person name="Sandhu D."/>
            <person name="Valliyodan B."/>
            <person name="Lindquist E."/>
            <person name="Peto M."/>
            <person name="Grant D."/>
            <person name="Shu S."/>
            <person name="Goodstein D."/>
            <person name="Barry K."/>
            <person name="Futrell-Griggs M."/>
            <person name="Abernathy B."/>
            <person name="Du J."/>
            <person name="Tian Z."/>
            <person name="Zhu L."/>
            <person name="Gill N."/>
            <person name="Joshi T."/>
            <person name="Libault M."/>
            <person name="Sethuraman A."/>
            <person name="Zhang X.-C."/>
            <person name="Shinozaki K."/>
            <person name="Nguyen H.T."/>
            <person name="Wing R.A."/>
            <person name="Cregan P."/>
            <person name="Specht J."/>
            <person name="Grimwood J."/>
            <person name="Rokhsar D."/>
            <person name="Stacey G."/>
            <person name="Shoemaker R.C."/>
            <person name="Jackson S.A."/>
        </authorList>
    </citation>
    <scope>NUCLEOTIDE SEQUENCE [LARGE SCALE GENOMIC DNA]</scope>
    <source>
        <strain>cv. Williams 82</strain>
        <tissue>Callus</tissue>
    </source>
</reference>
<reference key="2">
    <citation type="submission" date="2009-08" db="EMBL/GenBank/DDBJ databases">
        <authorList>
            <person name="Cheung F."/>
            <person name="Xiao Y."/>
            <person name="Chan A."/>
            <person name="Moskal W."/>
            <person name="Town C.D."/>
        </authorList>
    </citation>
    <scope>NUCLEOTIDE SEQUENCE [LARGE SCALE MRNA]</scope>
</reference>
<reference key="3">
    <citation type="journal article" date="2024" name="Elife">
        <title>Guanidine production by plant homoarginine-6-hydroxylases.</title>
        <authorList>
            <person name="Funck D."/>
            <person name="Sinn M."/>
            <person name="Forlani G."/>
            <person name="Hartig J.S."/>
        </authorList>
    </citation>
    <scope>FUNCTION</scope>
    <scope>CATALYTIC ACTIVITY</scope>
</reference>
<keyword id="KW-0963">Cytoplasm</keyword>
<keyword id="KW-0223">Dioxygenase</keyword>
<keyword id="KW-0408">Iron</keyword>
<keyword id="KW-0479">Metal-binding</keyword>
<keyword id="KW-0560">Oxidoreductase</keyword>
<keyword id="KW-1185">Reference proteome</keyword>
<name>ODD23_SOYBN</name>
<comment type="function">
    <text evidence="3">2-oxoglutarate-dependent dioxygenase catalyzing homoarginine 6-hydroxylation thus producing 6-hydroxy-L-homoarginine (PubMed:38619227). Guanidine (Gd) is in turn synthesized by the spontaneous conversion of 6-hydroxy-L-homoarginine to (S)-2-amino-6-oxohexanoate (RHEA:79843); guanidine is a nitrogen-rich compound that can serve as a defense or signaling substance (PubMed:38619227).</text>
</comment>
<comment type="catalytic activity">
    <reaction evidence="3">
        <text>L-homoarginine + 2-oxoglutarate + O2 = 6-hydroxy-L-homoarginine + succinate + CO2</text>
        <dbReference type="Rhea" id="RHEA:79839"/>
        <dbReference type="ChEBI" id="CHEBI:15379"/>
        <dbReference type="ChEBI" id="CHEBI:16526"/>
        <dbReference type="ChEBI" id="CHEBI:16810"/>
        <dbReference type="ChEBI" id="CHEBI:30031"/>
        <dbReference type="ChEBI" id="CHEBI:143006"/>
        <dbReference type="ChEBI" id="CHEBI:231270"/>
    </reaction>
</comment>
<comment type="cofactor">
    <cofactor evidence="2">
        <name>Fe(2+)</name>
        <dbReference type="ChEBI" id="CHEBI:29033"/>
    </cofactor>
    <text evidence="2">Binds 1 Fe(2+) ion per subunit.</text>
</comment>
<comment type="subcellular location">
    <subcellularLocation>
        <location evidence="1">Cytoplasm</location>
        <location evidence="1">Cytosol</location>
    </subcellularLocation>
</comment>
<comment type="similarity">
    <text evidence="5">Belongs to the iron/ascorbate-dependent oxidoreductase family.</text>
</comment>
<comment type="sequence caution" evidence="5">
    <conflict type="erroneous gene model prediction">
        <sequence resource="EMBL-CDS" id="KRH04548"/>
    </conflict>
</comment>
<organism>
    <name type="scientific">Glycine max</name>
    <name type="common">Soybean</name>
    <name type="synonym">Glycine hispida</name>
    <dbReference type="NCBI Taxonomy" id="3847"/>
    <lineage>
        <taxon>Eukaryota</taxon>
        <taxon>Viridiplantae</taxon>
        <taxon>Streptophyta</taxon>
        <taxon>Embryophyta</taxon>
        <taxon>Tracheophyta</taxon>
        <taxon>Spermatophyta</taxon>
        <taxon>Magnoliopsida</taxon>
        <taxon>eudicotyledons</taxon>
        <taxon>Gunneridae</taxon>
        <taxon>Pentapetalae</taxon>
        <taxon>rosids</taxon>
        <taxon>fabids</taxon>
        <taxon>Fabales</taxon>
        <taxon>Fabaceae</taxon>
        <taxon>Papilionoideae</taxon>
        <taxon>50 kb inversion clade</taxon>
        <taxon>NPAAA clade</taxon>
        <taxon>indigoferoid/millettioid clade</taxon>
        <taxon>Phaseoleae</taxon>
        <taxon>Glycine</taxon>
        <taxon>Glycine subgen. Soja</taxon>
    </lineage>
</organism>
<feature type="chain" id="PRO_0000461341" description="Homoarginine-6-hydroxylase 2-ODD-C23">
    <location>
        <begin position="1"/>
        <end position="331"/>
    </location>
</feature>
<feature type="domain" description="Fe2OG dioxygenase" evidence="2">
    <location>
        <begin position="182"/>
        <end position="289"/>
    </location>
</feature>
<feature type="binding site" evidence="2">
    <location>
        <position position="212"/>
    </location>
    <ligand>
        <name>Fe cation</name>
        <dbReference type="ChEBI" id="CHEBI:24875"/>
    </ligand>
</feature>
<feature type="binding site" evidence="2">
    <location>
        <position position="214"/>
    </location>
    <ligand>
        <name>Fe cation</name>
        <dbReference type="ChEBI" id="CHEBI:24875"/>
    </ligand>
</feature>
<feature type="binding site" evidence="2">
    <location>
        <position position="270"/>
    </location>
    <ligand>
        <name>Fe cation</name>
        <dbReference type="ChEBI" id="CHEBI:24875"/>
    </ligand>
</feature>
<feature type="binding site" evidence="2">
    <location>
        <position position="280"/>
    </location>
    <ligand>
        <name>2-oxoglutarate</name>
        <dbReference type="ChEBI" id="CHEBI:16810"/>
    </ligand>
</feature>
<feature type="sequence conflict" description="In Ref. 2; ACU18564." evidence="5" ref="2">
    <original>V</original>
    <variation>I</variation>
    <location>
        <position position="283"/>
    </location>
</feature>
<gene>
    <name evidence="4" type="primary">2ODDC23</name>
    <name evidence="6" type="ordered locus">GLYMA_17G169100</name>
    <name evidence="4" type="ORF">LOC100789278</name>
</gene>
<protein>
    <recommendedName>
        <fullName evidence="4">Homoarginine-6-hydroxylase 2-ODD-C23</fullName>
        <ecNumber evidence="2 3">1.14.11.-</ecNumber>
    </recommendedName>
    <alternativeName>
        <fullName evidence="4">2-oxoglutarate-dependent dioxygenase C23</fullName>
        <shortName evidence="4">Gm2-ODD-C23</shortName>
    </alternativeName>
</protein>
<proteinExistence type="evidence at protein level"/>
<dbReference type="EC" id="1.14.11.-" evidence="2 3"/>
<dbReference type="EMBL" id="CM000850">
    <property type="protein sequence ID" value="KRH04547.1"/>
    <property type="molecule type" value="Genomic_DNA"/>
</dbReference>
<dbReference type="EMBL" id="CM000850">
    <property type="protein sequence ID" value="KRH04548.1"/>
    <property type="status" value="ALT_SEQ"/>
    <property type="molecule type" value="Genomic_DNA"/>
</dbReference>
<dbReference type="EMBL" id="BT094236">
    <property type="protein sequence ID" value="ACU18564.1"/>
    <property type="molecule type" value="mRNA"/>
</dbReference>
<dbReference type="RefSeq" id="NP_001241995.1">
    <property type="nucleotide sequence ID" value="NM_001255066.2"/>
</dbReference>
<dbReference type="SMR" id="A0A0R4J5R0"/>
<dbReference type="FunCoup" id="A0A0R4J5R0">
    <property type="interactions" value="358"/>
</dbReference>
<dbReference type="PaxDb" id="3847-GLYMA17G18500.1"/>
<dbReference type="EnsemblPlants" id="KRH04547">
    <property type="protein sequence ID" value="KRH04547"/>
    <property type="gene ID" value="GLYMA_17G169100"/>
</dbReference>
<dbReference type="GeneID" id="100789278"/>
<dbReference type="Gramene" id="KRH04547">
    <property type="protein sequence ID" value="KRH04547"/>
    <property type="gene ID" value="GLYMA_17G169100"/>
</dbReference>
<dbReference type="KEGG" id="gmx:100789278"/>
<dbReference type="eggNOG" id="KOG0143">
    <property type="taxonomic scope" value="Eukaryota"/>
</dbReference>
<dbReference type="HOGENOM" id="CLU_010119_6_0_1"/>
<dbReference type="InParanoid" id="A0A0R4J5R0"/>
<dbReference type="OMA" id="ARETGFF"/>
<dbReference type="OrthoDB" id="288590at2759"/>
<dbReference type="Proteomes" id="UP000008827">
    <property type="component" value="Chromosome 17"/>
</dbReference>
<dbReference type="ExpressionAtlas" id="A0A0R4J5R0">
    <property type="expression patterns" value="baseline and differential"/>
</dbReference>
<dbReference type="GO" id="GO:0005829">
    <property type="term" value="C:cytosol"/>
    <property type="evidence" value="ECO:0007669"/>
    <property type="project" value="UniProtKB-SubCell"/>
</dbReference>
<dbReference type="GO" id="GO:0016706">
    <property type="term" value="F:2-oxoglutarate-dependent dioxygenase activity"/>
    <property type="evidence" value="ECO:0000314"/>
    <property type="project" value="UniProtKB"/>
</dbReference>
<dbReference type="GO" id="GO:0046872">
    <property type="term" value="F:metal ion binding"/>
    <property type="evidence" value="ECO:0007669"/>
    <property type="project" value="UniProtKB-KW"/>
</dbReference>
<dbReference type="FunFam" id="2.60.120.330:FF:000024">
    <property type="entry name" value="Probable 2-oxoglutarate-dependent dioxygenase At3g49630"/>
    <property type="match status" value="1"/>
</dbReference>
<dbReference type="Gene3D" id="2.60.120.330">
    <property type="entry name" value="B-lactam Antibiotic, Isopenicillin N Synthase, Chain"/>
    <property type="match status" value="1"/>
</dbReference>
<dbReference type="InterPro" id="IPR026992">
    <property type="entry name" value="DIOX_N"/>
</dbReference>
<dbReference type="InterPro" id="IPR044861">
    <property type="entry name" value="IPNS-like_FE2OG_OXY"/>
</dbReference>
<dbReference type="InterPro" id="IPR027443">
    <property type="entry name" value="IPNS-like_sf"/>
</dbReference>
<dbReference type="InterPro" id="IPR050231">
    <property type="entry name" value="Iron_ascorbate_oxido_reductase"/>
</dbReference>
<dbReference type="InterPro" id="IPR005123">
    <property type="entry name" value="Oxoglu/Fe-dep_dioxygenase_dom"/>
</dbReference>
<dbReference type="PANTHER" id="PTHR47990">
    <property type="entry name" value="2-OXOGLUTARATE (2OG) AND FE(II)-DEPENDENT OXYGENASE SUPERFAMILY PROTEIN-RELATED"/>
    <property type="match status" value="1"/>
</dbReference>
<dbReference type="Pfam" id="PF03171">
    <property type="entry name" value="2OG-FeII_Oxy"/>
    <property type="match status" value="1"/>
</dbReference>
<dbReference type="Pfam" id="PF14226">
    <property type="entry name" value="DIOX_N"/>
    <property type="match status" value="1"/>
</dbReference>
<dbReference type="PRINTS" id="PR00682">
    <property type="entry name" value="IPNSYNTHASE"/>
</dbReference>
<dbReference type="SUPFAM" id="SSF51197">
    <property type="entry name" value="Clavaminate synthase-like"/>
    <property type="match status" value="1"/>
</dbReference>
<dbReference type="PROSITE" id="PS51471">
    <property type="entry name" value="FE2OG_OXY"/>
    <property type="match status" value="1"/>
</dbReference>